<accession>A7FX11</accession>
<dbReference type="EC" id="2.4.1.227" evidence="1"/>
<dbReference type="EMBL" id="CP000726">
    <property type="protein sequence ID" value="ABS32813.1"/>
    <property type="molecule type" value="Genomic_DNA"/>
</dbReference>
<dbReference type="RefSeq" id="WP_011987044.1">
    <property type="nucleotide sequence ID" value="NC_009697.1"/>
</dbReference>
<dbReference type="SMR" id="A7FX11"/>
<dbReference type="CAZy" id="GT28">
    <property type="family name" value="Glycosyltransferase Family 28"/>
</dbReference>
<dbReference type="KEGG" id="cba:CLB_2702"/>
<dbReference type="HOGENOM" id="CLU_037404_0_0_9"/>
<dbReference type="UniPathway" id="UPA00219"/>
<dbReference type="GO" id="GO:0005886">
    <property type="term" value="C:plasma membrane"/>
    <property type="evidence" value="ECO:0007669"/>
    <property type="project" value="UniProtKB-SubCell"/>
</dbReference>
<dbReference type="GO" id="GO:0051991">
    <property type="term" value="F:UDP-N-acetyl-D-glucosamine:N-acetylmuramoyl-L-alanyl-D-glutamyl-meso-2,6-diaminopimelyl-D-alanyl-D-alanine-diphosphoundecaprenol 4-beta-N-acetylglucosaminlytransferase activity"/>
    <property type="evidence" value="ECO:0007669"/>
    <property type="project" value="RHEA"/>
</dbReference>
<dbReference type="GO" id="GO:0050511">
    <property type="term" value="F:undecaprenyldiphospho-muramoylpentapeptide beta-N-acetylglucosaminyltransferase activity"/>
    <property type="evidence" value="ECO:0007669"/>
    <property type="project" value="UniProtKB-UniRule"/>
</dbReference>
<dbReference type="GO" id="GO:0005975">
    <property type="term" value="P:carbohydrate metabolic process"/>
    <property type="evidence" value="ECO:0007669"/>
    <property type="project" value="InterPro"/>
</dbReference>
<dbReference type="GO" id="GO:0051301">
    <property type="term" value="P:cell division"/>
    <property type="evidence" value="ECO:0007669"/>
    <property type="project" value="UniProtKB-KW"/>
</dbReference>
<dbReference type="GO" id="GO:0071555">
    <property type="term" value="P:cell wall organization"/>
    <property type="evidence" value="ECO:0007669"/>
    <property type="project" value="UniProtKB-KW"/>
</dbReference>
<dbReference type="GO" id="GO:0030259">
    <property type="term" value="P:lipid glycosylation"/>
    <property type="evidence" value="ECO:0007669"/>
    <property type="project" value="UniProtKB-UniRule"/>
</dbReference>
<dbReference type="GO" id="GO:0009252">
    <property type="term" value="P:peptidoglycan biosynthetic process"/>
    <property type="evidence" value="ECO:0007669"/>
    <property type="project" value="UniProtKB-UniRule"/>
</dbReference>
<dbReference type="GO" id="GO:0008360">
    <property type="term" value="P:regulation of cell shape"/>
    <property type="evidence" value="ECO:0007669"/>
    <property type="project" value="UniProtKB-KW"/>
</dbReference>
<dbReference type="CDD" id="cd03785">
    <property type="entry name" value="GT28_MurG"/>
    <property type="match status" value="1"/>
</dbReference>
<dbReference type="Gene3D" id="3.40.50.2000">
    <property type="entry name" value="Glycogen Phosphorylase B"/>
    <property type="match status" value="2"/>
</dbReference>
<dbReference type="HAMAP" id="MF_00033">
    <property type="entry name" value="MurG"/>
    <property type="match status" value="1"/>
</dbReference>
<dbReference type="InterPro" id="IPR006009">
    <property type="entry name" value="GlcNAc_MurG"/>
</dbReference>
<dbReference type="InterPro" id="IPR007235">
    <property type="entry name" value="Glyco_trans_28_C"/>
</dbReference>
<dbReference type="InterPro" id="IPR004276">
    <property type="entry name" value="GlycoTrans_28_N"/>
</dbReference>
<dbReference type="NCBIfam" id="TIGR01133">
    <property type="entry name" value="murG"/>
    <property type="match status" value="1"/>
</dbReference>
<dbReference type="NCBIfam" id="NF009102">
    <property type="entry name" value="PRK12446.1"/>
    <property type="match status" value="1"/>
</dbReference>
<dbReference type="PANTHER" id="PTHR21015:SF27">
    <property type="entry name" value="UDP-N-ACETYLGLUCOSAMINE--N-ACETYLMURAMYL-(PENTAPEPTIDE) PYROPHOSPHORYL-UNDECAPRENOL N-ACETYLGLUCOSAMINE TRANSFERASE"/>
    <property type="match status" value="1"/>
</dbReference>
<dbReference type="PANTHER" id="PTHR21015">
    <property type="entry name" value="UDP-N-ACETYLGLUCOSAMINE--N-ACETYLMURAMYL-(PENTAPEPTIDE) PYROPHOSPHORYL-UNDECAPRENOL N-ACETYLGLUCOSAMINE TRANSFERASE 1"/>
    <property type="match status" value="1"/>
</dbReference>
<dbReference type="Pfam" id="PF04101">
    <property type="entry name" value="Glyco_tran_28_C"/>
    <property type="match status" value="1"/>
</dbReference>
<dbReference type="Pfam" id="PF03033">
    <property type="entry name" value="Glyco_transf_28"/>
    <property type="match status" value="1"/>
</dbReference>
<dbReference type="SUPFAM" id="SSF53756">
    <property type="entry name" value="UDP-Glycosyltransferase/glycogen phosphorylase"/>
    <property type="match status" value="1"/>
</dbReference>
<comment type="function">
    <text evidence="1">Cell wall formation. Catalyzes the transfer of a GlcNAc subunit on undecaprenyl-pyrophosphoryl-MurNAc-pentapeptide (lipid intermediate I) to form undecaprenyl-pyrophosphoryl-MurNAc-(pentapeptide)GlcNAc (lipid intermediate II).</text>
</comment>
<comment type="catalytic activity">
    <reaction evidence="1">
        <text>di-trans,octa-cis-undecaprenyl diphospho-N-acetyl-alpha-D-muramoyl-L-alanyl-D-glutamyl-meso-2,6-diaminopimeloyl-D-alanyl-D-alanine + UDP-N-acetyl-alpha-D-glucosamine = di-trans,octa-cis-undecaprenyl diphospho-[N-acetyl-alpha-D-glucosaminyl-(1-&gt;4)]-N-acetyl-alpha-D-muramoyl-L-alanyl-D-glutamyl-meso-2,6-diaminopimeloyl-D-alanyl-D-alanine + UDP + H(+)</text>
        <dbReference type="Rhea" id="RHEA:31227"/>
        <dbReference type="ChEBI" id="CHEBI:15378"/>
        <dbReference type="ChEBI" id="CHEBI:57705"/>
        <dbReference type="ChEBI" id="CHEBI:58223"/>
        <dbReference type="ChEBI" id="CHEBI:61387"/>
        <dbReference type="ChEBI" id="CHEBI:61388"/>
        <dbReference type="EC" id="2.4.1.227"/>
    </reaction>
</comment>
<comment type="pathway">
    <text evidence="1">Cell wall biogenesis; peptidoglycan biosynthesis.</text>
</comment>
<comment type="subcellular location">
    <subcellularLocation>
        <location evidence="1">Cell membrane</location>
        <topology evidence="1">Peripheral membrane protein</topology>
        <orientation evidence="1">Cytoplasmic side</orientation>
    </subcellularLocation>
</comment>
<comment type="similarity">
    <text evidence="1">Belongs to the glycosyltransferase 28 family. MurG subfamily.</text>
</comment>
<proteinExistence type="inferred from homology"/>
<reference key="1">
    <citation type="journal article" date="2007" name="PLoS ONE">
        <title>Analysis of the neurotoxin complex genes in Clostridium botulinum A1-A4 and B1 strains: BoNT/A3, /Ba4 and /B1 clusters are located within plasmids.</title>
        <authorList>
            <person name="Smith T.J."/>
            <person name="Hill K.K."/>
            <person name="Foley B.T."/>
            <person name="Detter J.C."/>
            <person name="Munk A.C."/>
            <person name="Bruce D.C."/>
            <person name="Doggett N.A."/>
            <person name="Smith L.A."/>
            <person name="Marks J.D."/>
            <person name="Xie G."/>
            <person name="Brettin T.S."/>
        </authorList>
    </citation>
    <scope>NUCLEOTIDE SEQUENCE [LARGE SCALE GENOMIC DNA]</scope>
    <source>
        <strain>ATCC 19397 / Type A</strain>
    </source>
</reference>
<organism>
    <name type="scientific">Clostridium botulinum (strain ATCC 19397 / Type A)</name>
    <dbReference type="NCBI Taxonomy" id="441770"/>
    <lineage>
        <taxon>Bacteria</taxon>
        <taxon>Bacillati</taxon>
        <taxon>Bacillota</taxon>
        <taxon>Clostridia</taxon>
        <taxon>Eubacteriales</taxon>
        <taxon>Clostridiaceae</taxon>
        <taxon>Clostridium</taxon>
    </lineage>
</organism>
<sequence length="354" mass="39608">MKKIIMTGGGTAGHVTPNLALVPELKKLGYEIKYIGSIEGIERKIIEKEGIEYFPISSGKLRRYFDLKNFSDPFKVLKGVFQAKKIIKREKPDIVFSKGGFVTVPVVIAAHLNKIPVIAHESDITPGLANKLATPYCTRVCVTFPESVKHIKGDKAVLTGTPIRRELLEGNKLEGIKLCGFKDNKPILLIIGGSLGSKIINEIVRKNLDNILSKFNIIHICGKSNLDENLENRKGYAQFEYVNEELPDLMKASDLVISRAGANVIYELLALKKPNLLIPLSKKSSRGDQILNAASFEKSGYSLVLKEEELEDKTLIKKLNYLYENRNVYINNMSKSKMDNGVKNITELIKKYTK</sequence>
<feature type="chain" id="PRO_1000002633" description="UDP-N-acetylglucosamine--N-acetylmuramyl-(pentapeptide) pyrophosphoryl-undecaprenol N-acetylglucosamine transferase">
    <location>
        <begin position="1"/>
        <end position="354"/>
    </location>
</feature>
<feature type="binding site" evidence="1">
    <location>
        <begin position="11"/>
        <end position="13"/>
    </location>
    <ligand>
        <name>UDP-N-acetyl-alpha-D-glucosamine</name>
        <dbReference type="ChEBI" id="CHEBI:57705"/>
    </ligand>
</feature>
<feature type="binding site" evidence="1">
    <location>
        <position position="164"/>
    </location>
    <ligand>
        <name>UDP-N-acetyl-alpha-D-glucosamine</name>
        <dbReference type="ChEBI" id="CHEBI:57705"/>
    </ligand>
</feature>
<feature type="binding site" evidence="1">
    <location>
        <position position="194"/>
    </location>
    <ligand>
        <name>UDP-N-acetyl-alpha-D-glucosamine</name>
        <dbReference type="ChEBI" id="CHEBI:57705"/>
    </ligand>
</feature>
<feature type="binding site" evidence="1">
    <location>
        <position position="289"/>
    </location>
    <ligand>
        <name>UDP-N-acetyl-alpha-D-glucosamine</name>
        <dbReference type="ChEBI" id="CHEBI:57705"/>
    </ligand>
</feature>
<protein>
    <recommendedName>
        <fullName evidence="1">UDP-N-acetylglucosamine--N-acetylmuramyl-(pentapeptide) pyrophosphoryl-undecaprenol N-acetylglucosamine transferase</fullName>
        <ecNumber evidence="1">2.4.1.227</ecNumber>
    </recommendedName>
    <alternativeName>
        <fullName evidence="1">Undecaprenyl-PP-MurNAc-pentapeptide-UDPGlcNAc GlcNAc transferase</fullName>
    </alternativeName>
</protein>
<gene>
    <name evidence="1" type="primary">murG</name>
    <name type="ordered locus">CLB_2702</name>
</gene>
<name>MURG_CLOB1</name>
<keyword id="KW-0131">Cell cycle</keyword>
<keyword id="KW-0132">Cell division</keyword>
<keyword id="KW-1003">Cell membrane</keyword>
<keyword id="KW-0133">Cell shape</keyword>
<keyword id="KW-0961">Cell wall biogenesis/degradation</keyword>
<keyword id="KW-0328">Glycosyltransferase</keyword>
<keyword id="KW-0472">Membrane</keyword>
<keyword id="KW-0573">Peptidoglycan synthesis</keyword>
<keyword id="KW-0808">Transferase</keyword>
<evidence type="ECO:0000255" key="1">
    <source>
        <dbReference type="HAMAP-Rule" id="MF_00033"/>
    </source>
</evidence>